<proteinExistence type="inferred from homology"/>
<reference key="1">
    <citation type="journal article" date="2004" name="Environ. Microbiol.">
        <title>The genome of Desulfotalea psychrophila, a sulfate-reducing bacterium from permanently cold Arctic sediments.</title>
        <authorList>
            <person name="Rabus R."/>
            <person name="Ruepp A."/>
            <person name="Frickey T."/>
            <person name="Rattei T."/>
            <person name="Fartmann B."/>
            <person name="Stark M."/>
            <person name="Bauer M."/>
            <person name="Zibat A."/>
            <person name="Lombardot T."/>
            <person name="Becker I."/>
            <person name="Amann J."/>
            <person name="Gellner K."/>
            <person name="Teeling H."/>
            <person name="Leuschner W.D."/>
            <person name="Gloeckner F.-O."/>
            <person name="Lupas A.N."/>
            <person name="Amann R."/>
            <person name="Klenk H.-P."/>
        </authorList>
    </citation>
    <scope>NUCLEOTIDE SEQUENCE [LARGE SCALE GENOMIC DNA]</scope>
    <source>
        <strain>DSM 12343 / LSv54</strain>
    </source>
</reference>
<sequence>MVDSIIVLSGGMDSAVLLAQTLKEGKTAQAISFDYGSKHNDRELPMAVGLCEEFAIKHQIIKLPFIGELFSSSLLTGGEEIPDGAYGQENMKSTVVPFRNGIMLAIAAGYAESVQAGEVLLGSHSGDHHIYPDCRPEFNNAFAEAVNLGTDGQVAIRFPFSEMTKRDIGDLGRTLDLDFAKTWTCYKGGELHCGVCAACDERKEALRHPEGLDVTKYLV</sequence>
<protein>
    <recommendedName>
        <fullName evidence="1">7-cyano-7-deazaguanine synthase</fullName>
        <ecNumber evidence="1">6.3.4.20</ecNumber>
    </recommendedName>
    <alternativeName>
        <fullName evidence="1">7-cyano-7-carbaguanine synthase</fullName>
    </alternativeName>
    <alternativeName>
        <fullName evidence="1">PreQ(0) synthase</fullName>
    </alternativeName>
    <alternativeName>
        <fullName evidence="1">Queuosine biosynthesis protein QueC</fullName>
    </alternativeName>
</protein>
<organism>
    <name type="scientific">Desulfotalea psychrophila (strain LSv54 / DSM 12343)</name>
    <dbReference type="NCBI Taxonomy" id="177439"/>
    <lineage>
        <taxon>Bacteria</taxon>
        <taxon>Pseudomonadati</taxon>
        <taxon>Thermodesulfobacteriota</taxon>
        <taxon>Desulfobulbia</taxon>
        <taxon>Desulfobulbales</taxon>
        <taxon>Desulfocapsaceae</taxon>
        <taxon>Desulfotalea</taxon>
    </lineage>
</organism>
<comment type="function">
    <text evidence="1">Catalyzes the ATP-dependent conversion of 7-carboxy-7-deazaguanine (CDG) to 7-cyano-7-deazaguanine (preQ(0)).</text>
</comment>
<comment type="catalytic activity">
    <reaction evidence="1">
        <text>7-carboxy-7-deazaguanine + NH4(+) + ATP = 7-cyano-7-deazaguanine + ADP + phosphate + H2O + H(+)</text>
        <dbReference type="Rhea" id="RHEA:27982"/>
        <dbReference type="ChEBI" id="CHEBI:15377"/>
        <dbReference type="ChEBI" id="CHEBI:15378"/>
        <dbReference type="ChEBI" id="CHEBI:28938"/>
        <dbReference type="ChEBI" id="CHEBI:30616"/>
        <dbReference type="ChEBI" id="CHEBI:43474"/>
        <dbReference type="ChEBI" id="CHEBI:45075"/>
        <dbReference type="ChEBI" id="CHEBI:61036"/>
        <dbReference type="ChEBI" id="CHEBI:456216"/>
        <dbReference type="EC" id="6.3.4.20"/>
    </reaction>
</comment>
<comment type="cofactor">
    <cofactor evidence="1">
        <name>Zn(2+)</name>
        <dbReference type="ChEBI" id="CHEBI:29105"/>
    </cofactor>
    <text evidence="1">Binds 1 zinc ion per subunit.</text>
</comment>
<comment type="pathway">
    <text evidence="1">Purine metabolism; 7-cyano-7-deazaguanine biosynthesis.</text>
</comment>
<comment type="similarity">
    <text evidence="1">Belongs to the QueC family.</text>
</comment>
<gene>
    <name evidence="1" type="primary">queC</name>
    <name type="ordered locus">DP0167</name>
</gene>
<evidence type="ECO:0000255" key="1">
    <source>
        <dbReference type="HAMAP-Rule" id="MF_01633"/>
    </source>
</evidence>
<dbReference type="EC" id="6.3.4.20" evidence="1"/>
<dbReference type="EMBL" id="CR522870">
    <property type="protein sequence ID" value="CAG34896.1"/>
    <property type="molecule type" value="Genomic_DNA"/>
</dbReference>
<dbReference type="RefSeq" id="WP_011187412.1">
    <property type="nucleotide sequence ID" value="NC_006138.1"/>
</dbReference>
<dbReference type="SMR" id="Q6ARX9"/>
<dbReference type="STRING" id="177439.DP0167"/>
<dbReference type="KEGG" id="dps:DP0167"/>
<dbReference type="eggNOG" id="COG0603">
    <property type="taxonomic scope" value="Bacteria"/>
</dbReference>
<dbReference type="HOGENOM" id="CLU_081854_1_0_7"/>
<dbReference type="OrthoDB" id="9789567at2"/>
<dbReference type="UniPathway" id="UPA00391"/>
<dbReference type="Proteomes" id="UP000000602">
    <property type="component" value="Chromosome"/>
</dbReference>
<dbReference type="GO" id="GO:0005524">
    <property type="term" value="F:ATP binding"/>
    <property type="evidence" value="ECO:0007669"/>
    <property type="project" value="UniProtKB-UniRule"/>
</dbReference>
<dbReference type="GO" id="GO:0016879">
    <property type="term" value="F:ligase activity, forming carbon-nitrogen bonds"/>
    <property type="evidence" value="ECO:0007669"/>
    <property type="project" value="UniProtKB-UniRule"/>
</dbReference>
<dbReference type="GO" id="GO:0008270">
    <property type="term" value="F:zinc ion binding"/>
    <property type="evidence" value="ECO:0007669"/>
    <property type="project" value="UniProtKB-UniRule"/>
</dbReference>
<dbReference type="GO" id="GO:0008616">
    <property type="term" value="P:queuosine biosynthetic process"/>
    <property type="evidence" value="ECO:0007669"/>
    <property type="project" value="UniProtKB-UniRule"/>
</dbReference>
<dbReference type="CDD" id="cd01995">
    <property type="entry name" value="QueC-like"/>
    <property type="match status" value="1"/>
</dbReference>
<dbReference type="Gene3D" id="3.40.50.620">
    <property type="entry name" value="HUPs"/>
    <property type="match status" value="1"/>
</dbReference>
<dbReference type="HAMAP" id="MF_01633">
    <property type="entry name" value="QueC"/>
    <property type="match status" value="1"/>
</dbReference>
<dbReference type="InterPro" id="IPR018317">
    <property type="entry name" value="QueC"/>
</dbReference>
<dbReference type="InterPro" id="IPR014729">
    <property type="entry name" value="Rossmann-like_a/b/a_fold"/>
</dbReference>
<dbReference type="NCBIfam" id="TIGR00364">
    <property type="entry name" value="7-cyano-7-deazaguanine synthase QueC"/>
    <property type="match status" value="1"/>
</dbReference>
<dbReference type="PANTHER" id="PTHR42914">
    <property type="entry name" value="7-CYANO-7-DEAZAGUANINE SYNTHASE"/>
    <property type="match status" value="1"/>
</dbReference>
<dbReference type="PANTHER" id="PTHR42914:SF1">
    <property type="entry name" value="7-CYANO-7-DEAZAGUANINE SYNTHASE"/>
    <property type="match status" value="1"/>
</dbReference>
<dbReference type="Pfam" id="PF06508">
    <property type="entry name" value="QueC"/>
    <property type="match status" value="1"/>
</dbReference>
<dbReference type="PIRSF" id="PIRSF006293">
    <property type="entry name" value="ExsB"/>
    <property type="match status" value="1"/>
</dbReference>
<dbReference type="SUPFAM" id="SSF52402">
    <property type="entry name" value="Adenine nucleotide alpha hydrolases-like"/>
    <property type="match status" value="1"/>
</dbReference>
<name>QUEC_DESPS</name>
<feature type="chain" id="PRO_0000246837" description="7-cyano-7-deazaguanine synthase">
    <location>
        <begin position="1"/>
        <end position="219"/>
    </location>
</feature>
<feature type="binding site" evidence="1">
    <location>
        <begin position="8"/>
        <end position="18"/>
    </location>
    <ligand>
        <name>ATP</name>
        <dbReference type="ChEBI" id="CHEBI:30616"/>
    </ligand>
</feature>
<feature type="binding site" evidence="1">
    <location>
        <position position="185"/>
    </location>
    <ligand>
        <name>Zn(2+)</name>
        <dbReference type="ChEBI" id="CHEBI:29105"/>
    </ligand>
</feature>
<feature type="binding site" evidence="1">
    <location>
        <position position="193"/>
    </location>
    <ligand>
        <name>Zn(2+)</name>
        <dbReference type="ChEBI" id="CHEBI:29105"/>
    </ligand>
</feature>
<feature type="binding site" evidence="1">
    <location>
        <position position="196"/>
    </location>
    <ligand>
        <name>Zn(2+)</name>
        <dbReference type="ChEBI" id="CHEBI:29105"/>
    </ligand>
</feature>
<feature type="binding site" evidence="1">
    <location>
        <position position="199"/>
    </location>
    <ligand>
        <name>Zn(2+)</name>
        <dbReference type="ChEBI" id="CHEBI:29105"/>
    </ligand>
</feature>
<keyword id="KW-0067">ATP-binding</keyword>
<keyword id="KW-0436">Ligase</keyword>
<keyword id="KW-0479">Metal-binding</keyword>
<keyword id="KW-0547">Nucleotide-binding</keyword>
<keyword id="KW-0671">Queuosine biosynthesis</keyword>
<keyword id="KW-1185">Reference proteome</keyword>
<keyword id="KW-0862">Zinc</keyword>
<accession>Q6ARX9</accession>